<name>BPT_ALKEH</name>
<reference key="1">
    <citation type="submission" date="2006-08" db="EMBL/GenBank/DDBJ databases">
        <title>Complete sequence of Alkalilimnicola ehrilichei MLHE-1.</title>
        <authorList>
            <person name="Copeland A."/>
            <person name="Lucas S."/>
            <person name="Lapidus A."/>
            <person name="Barry K."/>
            <person name="Detter J.C."/>
            <person name="Glavina del Rio T."/>
            <person name="Hammon N."/>
            <person name="Israni S."/>
            <person name="Dalin E."/>
            <person name="Tice H."/>
            <person name="Pitluck S."/>
            <person name="Sims D."/>
            <person name="Brettin T."/>
            <person name="Bruce D."/>
            <person name="Han C."/>
            <person name="Tapia R."/>
            <person name="Gilna P."/>
            <person name="Schmutz J."/>
            <person name="Larimer F."/>
            <person name="Land M."/>
            <person name="Hauser L."/>
            <person name="Kyrpides N."/>
            <person name="Mikhailova N."/>
            <person name="Oremland R.S."/>
            <person name="Hoeft S.E."/>
            <person name="Switzer-Blum J."/>
            <person name="Kulp T."/>
            <person name="King G."/>
            <person name="Tabita R."/>
            <person name="Witte B."/>
            <person name="Santini J.M."/>
            <person name="Basu P."/>
            <person name="Hollibaugh J.T."/>
            <person name="Xie G."/>
            <person name="Stolz J.F."/>
            <person name="Richardson P."/>
        </authorList>
    </citation>
    <scope>NUCLEOTIDE SEQUENCE [LARGE SCALE GENOMIC DNA]</scope>
    <source>
        <strain>ATCC BAA-1101 / DSM 17681 / MLHE-1</strain>
    </source>
</reference>
<dbReference type="EC" id="2.3.2.29" evidence="1"/>
<dbReference type="EMBL" id="CP000453">
    <property type="protein sequence ID" value="ABI57060.1"/>
    <property type="molecule type" value="Genomic_DNA"/>
</dbReference>
<dbReference type="RefSeq" id="WP_011629454.1">
    <property type="nucleotide sequence ID" value="NC_008340.1"/>
</dbReference>
<dbReference type="SMR" id="Q0A7X7"/>
<dbReference type="KEGG" id="aeh:Mlg_1714"/>
<dbReference type="eggNOG" id="COG2935">
    <property type="taxonomic scope" value="Bacteria"/>
</dbReference>
<dbReference type="HOGENOM" id="CLU_077607_0_0_6"/>
<dbReference type="OrthoDB" id="9782022at2"/>
<dbReference type="Proteomes" id="UP000001962">
    <property type="component" value="Chromosome"/>
</dbReference>
<dbReference type="GO" id="GO:0005737">
    <property type="term" value="C:cytoplasm"/>
    <property type="evidence" value="ECO:0007669"/>
    <property type="project" value="UniProtKB-SubCell"/>
</dbReference>
<dbReference type="GO" id="GO:0004057">
    <property type="term" value="F:arginyl-tRNA--protein transferase activity"/>
    <property type="evidence" value="ECO:0007669"/>
    <property type="project" value="InterPro"/>
</dbReference>
<dbReference type="GO" id="GO:0008914">
    <property type="term" value="F:leucyl-tRNA--protein transferase activity"/>
    <property type="evidence" value="ECO:0007669"/>
    <property type="project" value="UniProtKB-UniRule"/>
</dbReference>
<dbReference type="GO" id="GO:0071596">
    <property type="term" value="P:ubiquitin-dependent protein catabolic process via the N-end rule pathway"/>
    <property type="evidence" value="ECO:0007669"/>
    <property type="project" value="InterPro"/>
</dbReference>
<dbReference type="HAMAP" id="MF_00689">
    <property type="entry name" value="Bpt"/>
    <property type="match status" value="1"/>
</dbReference>
<dbReference type="InterPro" id="IPR016181">
    <property type="entry name" value="Acyl_CoA_acyltransferase"/>
</dbReference>
<dbReference type="InterPro" id="IPR017138">
    <property type="entry name" value="Asp_Glu_LeuTrfase"/>
</dbReference>
<dbReference type="InterPro" id="IPR030700">
    <property type="entry name" value="N-end_Aminoacyl_Trfase"/>
</dbReference>
<dbReference type="InterPro" id="IPR007472">
    <property type="entry name" value="N-end_Aminoacyl_Trfase_C"/>
</dbReference>
<dbReference type="InterPro" id="IPR007471">
    <property type="entry name" value="N-end_Aminoacyl_Trfase_N"/>
</dbReference>
<dbReference type="NCBIfam" id="NF002341">
    <property type="entry name" value="PRK01305.1-1"/>
    <property type="match status" value="1"/>
</dbReference>
<dbReference type="NCBIfam" id="NF002342">
    <property type="entry name" value="PRK01305.1-3"/>
    <property type="match status" value="1"/>
</dbReference>
<dbReference type="NCBIfam" id="NF002346">
    <property type="entry name" value="PRK01305.2-3"/>
    <property type="match status" value="1"/>
</dbReference>
<dbReference type="PANTHER" id="PTHR21367">
    <property type="entry name" value="ARGININE-TRNA-PROTEIN TRANSFERASE 1"/>
    <property type="match status" value="1"/>
</dbReference>
<dbReference type="PANTHER" id="PTHR21367:SF1">
    <property type="entry name" value="ARGINYL-TRNA--PROTEIN TRANSFERASE 1"/>
    <property type="match status" value="1"/>
</dbReference>
<dbReference type="Pfam" id="PF04377">
    <property type="entry name" value="ATE_C"/>
    <property type="match status" value="1"/>
</dbReference>
<dbReference type="Pfam" id="PF04376">
    <property type="entry name" value="ATE_N"/>
    <property type="match status" value="1"/>
</dbReference>
<dbReference type="PIRSF" id="PIRSF037208">
    <property type="entry name" value="ATE_pro_prd"/>
    <property type="match status" value="1"/>
</dbReference>
<dbReference type="SUPFAM" id="SSF55729">
    <property type="entry name" value="Acyl-CoA N-acyltransferases (Nat)"/>
    <property type="match status" value="1"/>
</dbReference>
<accession>Q0A7X7</accession>
<sequence length="239" mass="27729">MGRNDLIRRLPVYATGEHDCPYLDGETACTWFVDPDASLSPGLYSNLIRQGYRRSGRYIYRPGCDACHACQSLRIPVHRFRSRRRHRRCLKANAGATVEPLPSTYREEHYQLYCDYLQARHPGSEMSDPAIGDYLEFLRTDWCETLFYEFRDENDTLLGVAATDLVADGLSAVYTFYRPDLPERSLGTLAILWQINEARRLGLDYVYLGYWIKGCDQMRYKADFRPHEVFNGGRWLTVA</sequence>
<feature type="chain" id="PRO_0000263169" description="Aspartate/glutamate leucyltransferase">
    <location>
        <begin position="1"/>
        <end position="239"/>
    </location>
</feature>
<comment type="function">
    <text evidence="1">Functions in the N-end rule pathway of protein degradation where it conjugates Leu from its aminoacyl-tRNA to the N-termini of proteins containing an N-terminal aspartate or glutamate.</text>
</comment>
<comment type="catalytic activity">
    <reaction evidence="1">
        <text>N-terminal L-glutamyl-[protein] + L-leucyl-tRNA(Leu) = N-terminal L-leucyl-L-glutamyl-[protein] + tRNA(Leu) + H(+)</text>
        <dbReference type="Rhea" id="RHEA:50412"/>
        <dbReference type="Rhea" id="RHEA-COMP:9613"/>
        <dbReference type="Rhea" id="RHEA-COMP:9622"/>
        <dbReference type="Rhea" id="RHEA-COMP:12664"/>
        <dbReference type="Rhea" id="RHEA-COMP:12668"/>
        <dbReference type="ChEBI" id="CHEBI:15378"/>
        <dbReference type="ChEBI" id="CHEBI:64721"/>
        <dbReference type="ChEBI" id="CHEBI:78442"/>
        <dbReference type="ChEBI" id="CHEBI:78494"/>
        <dbReference type="ChEBI" id="CHEBI:133041"/>
        <dbReference type="EC" id="2.3.2.29"/>
    </reaction>
</comment>
<comment type="catalytic activity">
    <reaction evidence="1">
        <text>N-terminal L-aspartyl-[protein] + L-leucyl-tRNA(Leu) = N-terminal L-leucyl-L-aspartyl-[protein] + tRNA(Leu) + H(+)</text>
        <dbReference type="Rhea" id="RHEA:50420"/>
        <dbReference type="Rhea" id="RHEA-COMP:9613"/>
        <dbReference type="Rhea" id="RHEA-COMP:9622"/>
        <dbReference type="Rhea" id="RHEA-COMP:12669"/>
        <dbReference type="Rhea" id="RHEA-COMP:12674"/>
        <dbReference type="ChEBI" id="CHEBI:15378"/>
        <dbReference type="ChEBI" id="CHEBI:64720"/>
        <dbReference type="ChEBI" id="CHEBI:78442"/>
        <dbReference type="ChEBI" id="CHEBI:78494"/>
        <dbReference type="ChEBI" id="CHEBI:133042"/>
        <dbReference type="EC" id="2.3.2.29"/>
    </reaction>
</comment>
<comment type="subcellular location">
    <subcellularLocation>
        <location evidence="1">Cytoplasm</location>
    </subcellularLocation>
</comment>
<comment type="similarity">
    <text evidence="1">Belongs to the R-transferase family. Bpt subfamily.</text>
</comment>
<protein>
    <recommendedName>
        <fullName evidence="1">Aspartate/glutamate leucyltransferase</fullName>
        <ecNumber evidence="1">2.3.2.29</ecNumber>
    </recommendedName>
</protein>
<organism>
    <name type="scientific">Alkalilimnicola ehrlichii (strain ATCC BAA-1101 / DSM 17681 / MLHE-1)</name>
    <dbReference type="NCBI Taxonomy" id="187272"/>
    <lineage>
        <taxon>Bacteria</taxon>
        <taxon>Pseudomonadati</taxon>
        <taxon>Pseudomonadota</taxon>
        <taxon>Gammaproteobacteria</taxon>
        <taxon>Chromatiales</taxon>
        <taxon>Ectothiorhodospiraceae</taxon>
        <taxon>Alkalilimnicola</taxon>
    </lineage>
</organism>
<evidence type="ECO:0000255" key="1">
    <source>
        <dbReference type="HAMAP-Rule" id="MF_00689"/>
    </source>
</evidence>
<proteinExistence type="inferred from homology"/>
<gene>
    <name evidence="1" type="primary">bpt</name>
    <name type="ordered locus">Mlg_1714</name>
</gene>
<keyword id="KW-0012">Acyltransferase</keyword>
<keyword id="KW-0963">Cytoplasm</keyword>
<keyword id="KW-1185">Reference proteome</keyword>
<keyword id="KW-0808">Transferase</keyword>